<proteinExistence type="inferred from homology"/>
<sequence>MALLQIAEPGQSPKPHERRLAVGIDLGTTNSLVAAVRSGVAEPLPDAQGRLILPSAVRYHAERAEVGESARAAAAEDPFNTVISVKRLMGRGLEDVKQLGEQLPYRFRQGESHMPFIETVQGLKSPVEVSADILRELRQRAETTLGGELVGAVITVPAYFDDAQRQATKDAARLAGLNVLRLLNEPTAAAVAYGLDKGAEGLVAIYDLGGGTFDISILRLTRGVFEVLATGGDTALGGDDFDHAIAGWVIEEAGLSADLDPGSQRQLLQIACAAKERLTDEASVRVAYGDWSGELSRATLDELIEPFVARSLKSCRRAVRDSGVDLEEIRSVVMVGGSTRVPRVRTAVGELFGCEPLTDIDPDQVVAIGAAIQADALAGNKRGEELLLLDVIPLSLGLETMGGLMEKVIPRNTTIPVARAQEFTTYKDGQTAMMIHVLQGERELVKDCRSLARFELRGIPPMVAGAAKIRVTFQVDADGLLGVSARELSSGVEASIQVKPSYGLTDGEIARMLKDSFDYAGDDKAARALREQQVEAQRLLEAVQSALDVDGERLLDEEERLAIAAQMDTLRELAGGSDTAAIENQIKRLSQVTDAFAARRMDATVKAALSGRRLNEIEE</sequence>
<evidence type="ECO:0000255" key="1">
    <source>
        <dbReference type="HAMAP-Rule" id="MF_00679"/>
    </source>
</evidence>
<protein>
    <recommendedName>
        <fullName evidence="1">Chaperone protein HscA homolog</fullName>
    </recommendedName>
</protein>
<dbReference type="EMBL" id="FM209186">
    <property type="protein sequence ID" value="CAW25891.1"/>
    <property type="molecule type" value="Genomic_DNA"/>
</dbReference>
<dbReference type="RefSeq" id="WP_012613648.1">
    <property type="nucleotide sequence ID" value="NC_011770.1"/>
</dbReference>
<dbReference type="SMR" id="B7UWI1"/>
<dbReference type="KEGG" id="pag:PLES_11641"/>
<dbReference type="HOGENOM" id="CLU_005965_2_1_6"/>
<dbReference type="GO" id="GO:0005524">
    <property type="term" value="F:ATP binding"/>
    <property type="evidence" value="ECO:0007669"/>
    <property type="project" value="UniProtKB-KW"/>
</dbReference>
<dbReference type="GO" id="GO:0016887">
    <property type="term" value="F:ATP hydrolysis activity"/>
    <property type="evidence" value="ECO:0007669"/>
    <property type="project" value="UniProtKB-UniRule"/>
</dbReference>
<dbReference type="GO" id="GO:0140662">
    <property type="term" value="F:ATP-dependent protein folding chaperone"/>
    <property type="evidence" value="ECO:0007669"/>
    <property type="project" value="InterPro"/>
</dbReference>
<dbReference type="GO" id="GO:0051082">
    <property type="term" value="F:unfolded protein binding"/>
    <property type="evidence" value="ECO:0007669"/>
    <property type="project" value="InterPro"/>
</dbReference>
<dbReference type="GO" id="GO:0016226">
    <property type="term" value="P:iron-sulfur cluster assembly"/>
    <property type="evidence" value="ECO:0007669"/>
    <property type="project" value="InterPro"/>
</dbReference>
<dbReference type="CDD" id="cd10236">
    <property type="entry name" value="ASKHA_NBD_HSP70_HscA"/>
    <property type="match status" value="1"/>
</dbReference>
<dbReference type="FunFam" id="3.30.420.40:FF:000046">
    <property type="entry name" value="Chaperone protein HscA"/>
    <property type="match status" value="1"/>
</dbReference>
<dbReference type="FunFam" id="2.60.34.10:FF:000005">
    <property type="entry name" value="Chaperone protein HscA homolog"/>
    <property type="match status" value="1"/>
</dbReference>
<dbReference type="Gene3D" id="1.20.1270.10">
    <property type="match status" value="1"/>
</dbReference>
<dbReference type="Gene3D" id="3.30.420.40">
    <property type="match status" value="2"/>
</dbReference>
<dbReference type="Gene3D" id="3.90.640.10">
    <property type="entry name" value="Actin, Chain A, domain 4"/>
    <property type="match status" value="1"/>
</dbReference>
<dbReference type="Gene3D" id="2.60.34.10">
    <property type="entry name" value="Substrate Binding Domain Of DNAk, Chain A, domain 1"/>
    <property type="match status" value="1"/>
</dbReference>
<dbReference type="HAMAP" id="MF_00679">
    <property type="entry name" value="HscA"/>
    <property type="match status" value="1"/>
</dbReference>
<dbReference type="InterPro" id="IPR043129">
    <property type="entry name" value="ATPase_NBD"/>
</dbReference>
<dbReference type="InterPro" id="IPR018181">
    <property type="entry name" value="Heat_shock_70_CS"/>
</dbReference>
<dbReference type="InterPro" id="IPR042039">
    <property type="entry name" value="HscA_NBD"/>
</dbReference>
<dbReference type="InterPro" id="IPR029048">
    <property type="entry name" value="HSP70_C_sf"/>
</dbReference>
<dbReference type="InterPro" id="IPR029047">
    <property type="entry name" value="HSP70_peptide-bd_sf"/>
</dbReference>
<dbReference type="InterPro" id="IPR013126">
    <property type="entry name" value="Hsp_70_fam"/>
</dbReference>
<dbReference type="InterPro" id="IPR010236">
    <property type="entry name" value="ISC_FeS_clus_asmbl_HscA"/>
</dbReference>
<dbReference type="NCBIfam" id="TIGR01991">
    <property type="entry name" value="HscA"/>
    <property type="match status" value="1"/>
</dbReference>
<dbReference type="NCBIfam" id="NF003520">
    <property type="entry name" value="PRK05183.1"/>
    <property type="match status" value="1"/>
</dbReference>
<dbReference type="PANTHER" id="PTHR19375">
    <property type="entry name" value="HEAT SHOCK PROTEIN 70KDA"/>
    <property type="match status" value="1"/>
</dbReference>
<dbReference type="Pfam" id="PF00012">
    <property type="entry name" value="HSP70"/>
    <property type="match status" value="1"/>
</dbReference>
<dbReference type="PRINTS" id="PR00301">
    <property type="entry name" value="HEATSHOCK70"/>
</dbReference>
<dbReference type="SUPFAM" id="SSF53067">
    <property type="entry name" value="Actin-like ATPase domain"/>
    <property type="match status" value="2"/>
</dbReference>
<dbReference type="SUPFAM" id="SSF100934">
    <property type="entry name" value="Heat shock protein 70kD (HSP70), C-terminal subdomain"/>
    <property type="match status" value="1"/>
</dbReference>
<dbReference type="SUPFAM" id="SSF100920">
    <property type="entry name" value="Heat shock protein 70kD (HSP70), peptide-binding domain"/>
    <property type="match status" value="1"/>
</dbReference>
<dbReference type="PROSITE" id="PS00297">
    <property type="entry name" value="HSP70_1"/>
    <property type="match status" value="1"/>
</dbReference>
<dbReference type="PROSITE" id="PS00329">
    <property type="entry name" value="HSP70_2"/>
    <property type="match status" value="1"/>
</dbReference>
<dbReference type="PROSITE" id="PS01036">
    <property type="entry name" value="HSP70_3"/>
    <property type="match status" value="1"/>
</dbReference>
<accession>B7UWI1</accession>
<keyword id="KW-0067">ATP-binding</keyword>
<keyword id="KW-0143">Chaperone</keyword>
<keyword id="KW-0547">Nucleotide-binding</keyword>
<keyword id="KW-0346">Stress response</keyword>
<name>HSCA_PSEA8</name>
<reference key="1">
    <citation type="journal article" date="2009" name="Genome Res.">
        <title>Newly introduced genomic prophage islands are critical determinants of in vivo competitiveness in the Liverpool epidemic strain of Pseudomonas aeruginosa.</title>
        <authorList>
            <person name="Winstanley C."/>
            <person name="Langille M.G.I."/>
            <person name="Fothergill J.L."/>
            <person name="Kukavica-Ibrulj I."/>
            <person name="Paradis-Bleau C."/>
            <person name="Sanschagrin F."/>
            <person name="Thomson N.R."/>
            <person name="Winsor G.L."/>
            <person name="Quail M.A."/>
            <person name="Lennard N."/>
            <person name="Bignell A."/>
            <person name="Clarke L."/>
            <person name="Seeger K."/>
            <person name="Saunders D."/>
            <person name="Harris D."/>
            <person name="Parkhill J."/>
            <person name="Hancock R.E.W."/>
            <person name="Brinkman F.S.L."/>
            <person name="Levesque R.C."/>
        </authorList>
    </citation>
    <scope>NUCLEOTIDE SEQUENCE [LARGE SCALE GENOMIC DNA]</scope>
    <source>
        <strain>LESB58</strain>
    </source>
</reference>
<feature type="chain" id="PRO_1000131684" description="Chaperone protein HscA homolog">
    <location>
        <begin position="1"/>
        <end position="619"/>
    </location>
</feature>
<gene>
    <name evidence="1" type="primary">hscA</name>
    <name type="ordered locus">PLES_11641</name>
</gene>
<organism>
    <name type="scientific">Pseudomonas aeruginosa (strain LESB58)</name>
    <dbReference type="NCBI Taxonomy" id="557722"/>
    <lineage>
        <taxon>Bacteria</taxon>
        <taxon>Pseudomonadati</taxon>
        <taxon>Pseudomonadota</taxon>
        <taxon>Gammaproteobacteria</taxon>
        <taxon>Pseudomonadales</taxon>
        <taxon>Pseudomonadaceae</taxon>
        <taxon>Pseudomonas</taxon>
    </lineage>
</organism>
<comment type="function">
    <text evidence="1">Chaperone involved in the maturation of iron-sulfur cluster-containing proteins. Has a low intrinsic ATPase activity which is markedly stimulated by HscB.</text>
</comment>
<comment type="similarity">
    <text evidence="1">Belongs to the heat shock protein 70 family.</text>
</comment>